<keyword id="KW-0175">Coiled coil</keyword>
<keyword id="KW-0509">mRNA transport</keyword>
<keyword id="KW-0539">Nucleus</keyword>
<keyword id="KW-1185">Reference proteome</keyword>
<keyword id="KW-0690">Ribosome biogenesis</keyword>
<keyword id="KW-0813">Transport</keyword>
<protein>
    <recommendedName>
        <fullName>60S ribosomal subunit assembly/export protein LOC1</fullName>
    </recommendedName>
</protein>
<comment type="function">
    <text evidence="1">Required for efficient assembly and nuclear export of the 60S ribosomal subunit.</text>
</comment>
<comment type="subunit">
    <text evidence="1">Component of the 66S pre-ribosomal particle.</text>
</comment>
<comment type="subcellular location">
    <subcellularLocation>
        <location evidence="1">Nucleus</location>
        <location evidence="1">Nucleolus</location>
    </subcellularLocation>
</comment>
<comment type="similarity">
    <text evidence="4">Belongs to the LOC1 family.</text>
</comment>
<dbReference type="EMBL" id="GG704911">
    <property type="protein sequence ID" value="EAS37356.3"/>
    <property type="molecule type" value="Genomic_DNA"/>
</dbReference>
<dbReference type="RefSeq" id="XP_001248939.1">
    <property type="nucleotide sequence ID" value="XM_001248938.2"/>
</dbReference>
<dbReference type="SMR" id="Q1E403"/>
<dbReference type="STRING" id="246410.Q1E403"/>
<dbReference type="GeneID" id="4567637"/>
<dbReference type="KEGG" id="cim:CIMG_02710"/>
<dbReference type="VEuPathDB" id="FungiDB:CIMG_02710"/>
<dbReference type="InParanoid" id="Q1E403"/>
<dbReference type="OMA" id="NAEQEGH"/>
<dbReference type="OrthoDB" id="1743802at2759"/>
<dbReference type="Proteomes" id="UP000001261">
    <property type="component" value="Unassembled WGS sequence"/>
</dbReference>
<dbReference type="GO" id="GO:0005730">
    <property type="term" value="C:nucleolus"/>
    <property type="evidence" value="ECO:0007669"/>
    <property type="project" value="UniProtKB-SubCell"/>
</dbReference>
<dbReference type="GO" id="GO:0030687">
    <property type="term" value="C:preribosome, large subunit precursor"/>
    <property type="evidence" value="ECO:0007669"/>
    <property type="project" value="TreeGrafter"/>
</dbReference>
<dbReference type="GO" id="GO:0003729">
    <property type="term" value="F:mRNA binding"/>
    <property type="evidence" value="ECO:0007669"/>
    <property type="project" value="InterPro"/>
</dbReference>
<dbReference type="GO" id="GO:0008298">
    <property type="term" value="P:intracellular mRNA localization"/>
    <property type="evidence" value="ECO:0007669"/>
    <property type="project" value="TreeGrafter"/>
</dbReference>
<dbReference type="GO" id="GO:0051028">
    <property type="term" value="P:mRNA transport"/>
    <property type="evidence" value="ECO:0007669"/>
    <property type="project" value="UniProtKB-KW"/>
</dbReference>
<dbReference type="GO" id="GO:0042273">
    <property type="term" value="P:ribosomal large subunit biogenesis"/>
    <property type="evidence" value="ECO:0007669"/>
    <property type="project" value="InterPro"/>
</dbReference>
<dbReference type="InterPro" id="IPR037650">
    <property type="entry name" value="Loc1"/>
</dbReference>
<dbReference type="PANTHER" id="PTHR28028">
    <property type="entry name" value="60S RIBOSOMAL SUBUNIT ASSEMBLY/EXPORT PROTEIN LOC1"/>
    <property type="match status" value="1"/>
</dbReference>
<dbReference type="PANTHER" id="PTHR28028:SF1">
    <property type="entry name" value="60S RIBOSOMAL SUBUNIT ASSEMBLY_EXPORT PROTEIN LOC1"/>
    <property type="match status" value="1"/>
</dbReference>
<gene>
    <name type="primary">LOC1</name>
    <name type="ORF">CIMG_02710</name>
</gene>
<reference key="1">
    <citation type="journal article" date="2009" name="Genome Res.">
        <title>Comparative genomic analyses of the human fungal pathogens Coccidioides and their relatives.</title>
        <authorList>
            <person name="Sharpton T.J."/>
            <person name="Stajich J.E."/>
            <person name="Rounsley S.D."/>
            <person name="Gardner M.J."/>
            <person name="Wortman J.R."/>
            <person name="Jordar V.S."/>
            <person name="Maiti R."/>
            <person name="Kodira C.D."/>
            <person name="Neafsey D.E."/>
            <person name="Zeng Q."/>
            <person name="Hung C.-Y."/>
            <person name="McMahan C."/>
            <person name="Muszewska A."/>
            <person name="Grynberg M."/>
            <person name="Mandel M.A."/>
            <person name="Kellner E.M."/>
            <person name="Barker B.M."/>
            <person name="Galgiani J.N."/>
            <person name="Orbach M.J."/>
            <person name="Kirkland T.N."/>
            <person name="Cole G.T."/>
            <person name="Henn M.R."/>
            <person name="Birren B.W."/>
            <person name="Taylor J.W."/>
        </authorList>
    </citation>
    <scope>NUCLEOTIDE SEQUENCE [LARGE SCALE GENOMIC DNA]</scope>
    <source>
        <strain>RS</strain>
    </source>
</reference>
<reference key="2">
    <citation type="journal article" date="2010" name="Genome Res.">
        <title>Population genomic sequencing of Coccidioides fungi reveals recent hybridization and transposon control.</title>
        <authorList>
            <person name="Neafsey D.E."/>
            <person name="Barker B.M."/>
            <person name="Sharpton T.J."/>
            <person name="Stajich J.E."/>
            <person name="Park D.J."/>
            <person name="Whiston E."/>
            <person name="Hung C.-Y."/>
            <person name="McMahan C."/>
            <person name="White J."/>
            <person name="Sykes S."/>
            <person name="Heiman D."/>
            <person name="Young S."/>
            <person name="Zeng Q."/>
            <person name="Abouelleil A."/>
            <person name="Aftuck L."/>
            <person name="Bessette D."/>
            <person name="Brown A."/>
            <person name="FitzGerald M."/>
            <person name="Lui A."/>
            <person name="Macdonald J.P."/>
            <person name="Priest M."/>
            <person name="Orbach M.J."/>
            <person name="Galgiani J.N."/>
            <person name="Kirkland T.N."/>
            <person name="Cole G.T."/>
            <person name="Birren B.W."/>
            <person name="Henn M.R."/>
            <person name="Taylor J.W."/>
            <person name="Rounsley S.D."/>
        </authorList>
    </citation>
    <scope>GENOME REANNOTATION</scope>
    <source>
        <strain>RS</strain>
    </source>
</reference>
<name>LOC1_COCIM</name>
<feature type="chain" id="PRO_0000308792" description="60S ribosomal subunit assembly/export protein LOC1">
    <location>
        <begin position="1"/>
        <end position="195"/>
    </location>
</feature>
<feature type="region of interest" description="Disordered" evidence="3">
    <location>
        <begin position="1"/>
        <end position="74"/>
    </location>
</feature>
<feature type="region of interest" description="Disordered" evidence="3">
    <location>
        <begin position="136"/>
        <end position="195"/>
    </location>
</feature>
<feature type="coiled-coil region" evidence="2">
    <location>
        <begin position="124"/>
        <end position="166"/>
    </location>
</feature>
<feature type="compositionally biased region" description="Low complexity" evidence="3">
    <location>
        <begin position="7"/>
        <end position="40"/>
    </location>
</feature>
<feature type="compositionally biased region" description="Basic and acidic residues" evidence="3">
    <location>
        <begin position="46"/>
        <end position="60"/>
    </location>
</feature>
<feature type="compositionally biased region" description="Basic and acidic residues" evidence="3">
    <location>
        <begin position="136"/>
        <end position="159"/>
    </location>
</feature>
<feature type="compositionally biased region" description="Basic and acidic residues" evidence="3">
    <location>
        <begin position="167"/>
        <end position="178"/>
    </location>
</feature>
<feature type="compositionally biased region" description="Basic residues" evidence="3">
    <location>
        <begin position="186"/>
        <end position="195"/>
    </location>
</feature>
<organism>
    <name type="scientific">Coccidioides immitis (strain RS)</name>
    <name type="common">Valley fever fungus</name>
    <dbReference type="NCBI Taxonomy" id="246410"/>
    <lineage>
        <taxon>Eukaryota</taxon>
        <taxon>Fungi</taxon>
        <taxon>Dikarya</taxon>
        <taxon>Ascomycota</taxon>
        <taxon>Pezizomycotina</taxon>
        <taxon>Eurotiomycetes</taxon>
        <taxon>Eurotiomycetidae</taxon>
        <taxon>Onygenales</taxon>
        <taxon>Onygenaceae</taxon>
        <taxon>Coccidioides</taxon>
    </lineage>
</organism>
<evidence type="ECO:0000250" key="1"/>
<evidence type="ECO:0000255" key="2"/>
<evidence type="ECO:0000256" key="3">
    <source>
        <dbReference type="SAM" id="MobiDB-lite"/>
    </source>
</evidence>
<evidence type="ECO:0000305" key="4"/>
<accession>Q1E403</accession>
<accession>J3KMC8</accession>
<proteinExistence type="inferred from homology"/>
<sequence>MAPNRGASSSKQSNKSASKKSSSSSTLASKSRVSKSSANKNAKRPPPKEVKTKARTEKALQKKTKKREYTEKELNLPALNMITPVGVQKPRGKKKGKVFVDDQESMMTILAMVNAEKEGQIESKIMKARQMEEIREARRKEAEARQEQRKFKYEETKELLKRKRKNGGKEQQAKKDNDQSTTPPKKPNKKRVAFA</sequence>